<reference key="1">
    <citation type="submission" date="2006-08" db="EMBL/GenBank/DDBJ databases">
        <title>Positive selection in transcription factor genes on the human lineage.</title>
        <authorList>
            <person name="Nickel G.C."/>
            <person name="Tefft D.L."/>
            <person name="Trevarthen K."/>
            <person name="Funt J."/>
            <person name="Adams M.D."/>
        </authorList>
    </citation>
    <scope>NUCLEOTIDE SEQUENCE [GENOMIC DNA]</scope>
</reference>
<comment type="function">
    <text evidence="1">Required for the normal development of the forebrain, eyes and other anterior structures such as the olfactory placodes and pituitary gland. Possible transcriptional repressor. Binds to the palindromic PIII sequence, 5'-AGCTTGAGTCTAATTGAATTAACTGTAC-3'. HESX1 and PROP1 bind as heterodimers on this palindromic site, and, in vitro, HESX1 can antagonize PROP1 activation (By similarity).</text>
</comment>
<comment type="subunit">
    <text evidence="1">Can form heterodimers with PROP1 in binding to DNA. Interacts with TLE1 (By similarity).</text>
</comment>
<comment type="subcellular location">
    <subcellularLocation>
        <location evidence="2">Nucleus</location>
    </subcellularLocation>
</comment>
<comment type="similarity">
    <text evidence="3">Belongs to the ANF homeobox family.</text>
</comment>
<dbReference type="EMBL" id="DQ977388">
    <property type="protein sequence ID" value="ABM92032.1"/>
    <property type="molecule type" value="Genomic_DNA"/>
</dbReference>
<dbReference type="RefSeq" id="NP_001075039.1">
    <property type="nucleotide sequence ID" value="NM_001081570.1"/>
</dbReference>
<dbReference type="RefSeq" id="XP_009443736.1">
    <property type="nucleotide sequence ID" value="XM_009445461.2"/>
</dbReference>
<dbReference type="RefSeq" id="XP_009443737.1">
    <property type="nucleotide sequence ID" value="XM_009445462.5"/>
</dbReference>
<dbReference type="RefSeq" id="XP_016795536.1">
    <property type="nucleotide sequence ID" value="XM_016940047.4"/>
</dbReference>
<dbReference type="RefSeq" id="XP_016795537.1">
    <property type="nucleotide sequence ID" value="XM_016940048.1"/>
</dbReference>
<dbReference type="RefSeq" id="XP_054536299.1">
    <property type="nucleotide sequence ID" value="XM_054680324.2"/>
</dbReference>
<dbReference type="RefSeq" id="XP_063661359.1">
    <property type="nucleotide sequence ID" value="XM_063805289.1"/>
</dbReference>
<dbReference type="RefSeq" id="XP_063661360.1">
    <property type="nucleotide sequence ID" value="XM_063805290.1"/>
</dbReference>
<dbReference type="SMR" id="A2T777"/>
<dbReference type="FunCoup" id="A2T777">
    <property type="interactions" value="1181"/>
</dbReference>
<dbReference type="STRING" id="9598.ENSPTRP00000025986"/>
<dbReference type="PaxDb" id="9598-ENSPTRP00000025986"/>
<dbReference type="Ensembl" id="ENSPTRT00000028167.4">
    <property type="protein sequence ID" value="ENSPTRP00000025986.3"/>
    <property type="gene ID" value="ENSPTRG00000015044.4"/>
</dbReference>
<dbReference type="GeneID" id="747229"/>
<dbReference type="KEGG" id="ptr:747229"/>
<dbReference type="CTD" id="8820"/>
<dbReference type="VGNC" id="VGNC:1836">
    <property type="gene designation" value="HESX1"/>
</dbReference>
<dbReference type="eggNOG" id="KOG0490">
    <property type="taxonomic scope" value="Eukaryota"/>
</dbReference>
<dbReference type="GeneTree" id="ENSGT00940000156780"/>
<dbReference type="HOGENOM" id="CLU_125528_0_0_1"/>
<dbReference type="InParanoid" id="A2T777"/>
<dbReference type="OMA" id="VNLCVHI"/>
<dbReference type="OrthoDB" id="957at9604"/>
<dbReference type="TreeFam" id="TF335506"/>
<dbReference type="Proteomes" id="UP000002277">
    <property type="component" value="Chromosome 3"/>
</dbReference>
<dbReference type="Bgee" id="ENSPTRG00000015044">
    <property type="expression patterns" value="Expressed in testis and 12 other cell types or tissues"/>
</dbReference>
<dbReference type="GO" id="GO:0005634">
    <property type="term" value="C:nucleus"/>
    <property type="evidence" value="ECO:0000250"/>
    <property type="project" value="UniProtKB"/>
</dbReference>
<dbReference type="GO" id="GO:0003682">
    <property type="term" value="F:chromatin binding"/>
    <property type="evidence" value="ECO:0007669"/>
    <property type="project" value="Ensembl"/>
</dbReference>
<dbReference type="GO" id="GO:0003677">
    <property type="term" value="F:DNA binding"/>
    <property type="evidence" value="ECO:0000250"/>
    <property type="project" value="UniProtKB"/>
</dbReference>
<dbReference type="GO" id="GO:0001227">
    <property type="term" value="F:DNA-binding transcription repressor activity, RNA polymerase II-specific"/>
    <property type="evidence" value="ECO:0000318"/>
    <property type="project" value="GO_Central"/>
</dbReference>
<dbReference type="GO" id="GO:0042803">
    <property type="term" value="F:protein homodimerization activity"/>
    <property type="evidence" value="ECO:0007669"/>
    <property type="project" value="Ensembl"/>
</dbReference>
<dbReference type="GO" id="GO:0000978">
    <property type="term" value="F:RNA polymerase II cis-regulatory region sequence-specific DNA binding"/>
    <property type="evidence" value="ECO:0000250"/>
    <property type="project" value="UniProtKB"/>
</dbReference>
<dbReference type="GO" id="GO:0043010">
    <property type="term" value="P:camera-type eye development"/>
    <property type="evidence" value="ECO:0007669"/>
    <property type="project" value="Ensembl"/>
</dbReference>
<dbReference type="GO" id="GO:0060070">
    <property type="term" value="P:canonical Wnt signaling pathway"/>
    <property type="evidence" value="ECO:0007669"/>
    <property type="project" value="Ensembl"/>
</dbReference>
<dbReference type="GO" id="GO:0071276">
    <property type="term" value="P:cellular response to cadmium ion"/>
    <property type="evidence" value="ECO:0007669"/>
    <property type="project" value="Ensembl"/>
</dbReference>
<dbReference type="GO" id="GO:0070371">
    <property type="term" value="P:ERK1 and ERK2 cascade"/>
    <property type="evidence" value="ECO:0007669"/>
    <property type="project" value="Ensembl"/>
</dbReference>
<dbReference type="GO" id="GO:0048853">
    <property type="term" value="P:forebrain morphogenesis"/>
    <property type="evidence" value="ECO:0007669"/>
    <property type="project" value="Ensembl"/>
</dbReference>
<dbReference type="GO" id="GO:0010467">
    <property type="term" value="P:gene expression"/>
    <property type="evidence" value="ECO:0007669"/>
    <property type="project" value="Ensembl"/>
</dbReference>
<dbReference type="GO" id="GO:0008406">
    <property type="term" value="P:gonad development"/>
    <property type="evidence" value="ECO:0007669"/>
    <property type="project" value="Ensembl"/>
</dbReference>
<dbReference type="GO" id="GO:0048861">
    <property type="term" value="P:leukemia inhibitory factor signaling pathway"/>
    <property type="evidence" value="ECO:0007669"/>
    <property type="project" value="Ensembl"/>
</dbReference>
<dbReference type="GO" id="GO:0035264">
    <property type="term" value="P:multicellular organism growth"/>
    <property type="evidence" value="ECO:0007669"/>
    <property type="project" value="Ensembl"/>
</dbReference>
<dbReference type="GO" id="GO:0043584">
    <property type="term" value="P:nose development"/>
    <property type="evidence" value="ECO:0007669"/>
    <property type="project" value="Ensembl"/>
</dbReference>
<dbReference type="GO" id="GO:0030916">
    <property type="term" value="P:otic vesicle formation"/>
    <property type="evidence" value="ECO:0007669"/>
    <property type="project" value="Ensembl"/>
</dbReference>
<dbReference type="GO" id="GO:0021983">
    <property type="term" value="P:pituitary gland development"/>
    <property type="evidence" value="ECO:0000250"/>
    <property type="project" value="UniProtKB"/>
</dbReference>
<dbReference type="GO" id="GO:0045995">
    <property type="term" value="P:regulation of embryonic development"/>
    <property type="evidence" value="ECO:0007669"/>
    <property type="project" value="Ensembl"/>
</dbReference>
<dbReference type="GO" id="GO:0006357">
    <property type="term" value="P:regulation of transcription by RNA polymerase II"/>
    <property type="evidence" value="ECO:0000318"/>
    <property type="project" value="GO_Central"/>
</dbReference>
<dbReference type="GO" id="GO:0048863">
    <property type="term" value="P:stem cell differentiation"/>
    <property type="evidence" value="ECO:0007669"/>
    <property type="project" value="Ensembl"/>
</dbReference>
<dbReference type="GO" id="GO:0019827">
    <property type="term" value="P:stem cell population maintenance"/>
    <property type="evidence" value="ECO:0007669"/>
    <property type="project" value="Ensembl"/>
</dbReference>
<dbReference type="GO" id="GO:0030878">
    <property type="term" value="P:thyroid gland development"/>
    <property type="evidence" value="ECO:0007669"/>
    <property type="project" value="Ensembl"/>
</dbReference>
<dbReference type="CDD" id="cd00086">
    <property type="entry name" value="homeodomain"/>
    <property type="match status" value="1"/>
</dbReference>
<dbReference type="FunFam" id="1.10.10.60:FF:000214">
    <property type="entry name" value="Homeobox expressed in ES cells 1"/>
    <property type="match status" value="1"/>
</dbReference>
<dbReference type="Gene3D" id="1.10.10.60">
    <property type="entry name" value="Homeodomain-like"/>
    <property type="match status" value="1"/>
</dbReference>
<dbReference type="InterPro" id="IPR001356">
    <property type="entry name" value="HD"/>
</dbReference>
<dbReference type="InterPro" id="IPR043402">
    <property type="entry name" value="Hesx1"/>
</dbReference>
<dbReference type="InterPro" id="IPR017970">
    <property type="entry name" value="Homeobox_CS"/>
</dbReference>
<dbReference type="InterPro" id="IPR009057">
    <property type="entry name" value="Homeodomain-like_sf"/>
</dbReference>
<dbReference type="PANTHER" id="PTHR46966">
    <property type="entry name" value="HOMEOBOX EXPRESSED IN ES CELLS 1"/>
    <property type="match status" value="1"/>
</dbReference>
<dbReference type="PANTHER" id="PTHR46966:SF1">
    <property type="entry name" value="HOMEOBOX EXPRESSED IN ES CELLS 1"/>
    <property type="match status" value="1"/>
</dbReference>
<dbReference type="Pfam" id="PF00046">
    <property type="entry name" value="Homeodomain"/>
    <property type="match status" value="1"/>
</dbReference>
<dbReference type="SMART" id="SM00389">
    <property type="entry name" value="HOX"/>
    <property type="match status" value="1"/>
</dbReference>
<dbReference type="SUPFAM" id="SSF46689">
    <property type="entry name" value="Homeodomain-like"/>
    <property type="match status" value="1"/>
</dbReference>
<dbReference type="PROSITE" id="PS00027">
    <property type="entry name" value="HOMEOBOX_1"/>
    <property type="match status" value="1"/>
</dbReference>
<dbReference type="PROSITE" id="PS50071">
    <property type="entry name" value="HOMEOBOX_2"/>
    <property type="match status" value="1"/>
</dbReference>
<feature type="chain" id="PRO_0000285448" description="Homeobox expressed in ES cells 1">
    <location>
        <begin position="1"/>
        <end position="185"/>
    </location>
</feature>
<feature type="DNA-binding region" description="Homeobox" evidence="2">
    <location>
        <begin position="108"/>
        <end position="167"/>
    </location>
</feature>
<proteinExistence type="inferred from homology"/>
<sequence length="185" mass="21394">MSPSLQEGAQLGESKPSTCSFSIERILGLDQNKDCVPLMKPHRPWADTCSSSGKDGNLCLHVPNPPSGISFPSVVDHPMPEERALKYENYFSASERLSLKRELSWYRGRRPRTAFTQNQIEVLENVFRVNCYPGIDIREDLAQKLNLEEDRIQIWFQNRRAKLKRSHRESQFLMAKKNFNTNLLE</sequence>
<keyword id="KW-0217">Developmental protein</keyword>
<keyword id="KW-0238">DNA-binding</keyword>
<keyword id="KW-0371">Homeobox</keyword>
<keyword id="KW-0539">Nucleus</keyword>
<keyword id="KW-1185">Reference proteome</keyword>
<keyword id="KW-0804">Transcription</keyword>
<keyword id="KW-0805">Transcription regulation</keyword>
<organism>
    <name type="scientific">Pan troglodytes</name>
    <name type="common">Chimpanzee</name>
    <dbReference type="NCBI Taxonomy" id="9598"/>
    <lineage>
        <taxon>Eukaryota</taxon>
        <taxon>Metazoa</taxon>
        <taxon>Chordata</taxon>
        <taxon>Craniata</taxon>
        <taxon>Vertebrata</taxon>
        <taxon>Euteleostomi</taxon>
        <taxon>Mammalia</taxon>
        <taxon>Eutheria</taxon>
        <taxon>Euarchontoglires</taxon>
        <taxon>Primates</taxon>
        <taxon>Haplorrhini</taxon>
        <taxon>Catarrhini</taxon>
        <taxon>Hominidae</taxon>
        <taxon>Pan</taxon>
    </lineage>
</organism>
<gene>
    <name type="primary">HESX1</name>
</gene>
<evidence type="ECO:0000250" key="1"/>
<evidence type="ECO:0000255" key="2">
    <source>
        <dbReference type="PROSITE-ProRule" id="PRU00108"/>
    </source>
</evidence>
<evidence type="ECO:0000305" key="3"/>
<name>HESX1_PANTR</name>
<accession>A2T777</accession>
<protein>
    <recommendedName>
        <fullName>Homeobox expressed in ES cells 1</fullName>
    </recommendedName>
</protein>